<feature type="chain" id="PRO_1000197951" description="D-serine dehydratase">
    <location>
        <begin position="1"/>
        <end position="440"/>
    </location>
</feature>
<feature type="modified residue" description="N6-(pyridoxal phosphate)lysine" evidence="1">
    <location>
        <position position="116"/>
    </location>
</feature>
<keyword id="KW-0456">Lyase</keyword>
<keyword id="KW-0663">Pyridoxal phosphate</keyword>
<name>SDHD_SALSV</name>
<sequence length="440" mass="47384">MENIQKLIARYPLVEDLVALKETTWFNPGATSLAQGLPYVGLTEQDVNAAHDRLARFAPYLAKAFPQTAAAGGMIESDVVAIPAMQKRLEKEYGQTIDGEMLLKKDSHLAISGSIKARGGIYEVLTHAEKLALEAGLLTTDDDYSVLLSPEFKQFFSQYSIAVGSTGNLGLSIGIMSACIGFKVTVHMSADARAWKKAKLRSHGVTVVEYEDDYGVAVEQGRKAAQSDPNCFFIDDENSRTLFLGYAVAGQRLKAQFAQQGRVVDASHPLFVYLPCGVGGGPGGVAFGLKLAFGDNVHCFFAEPTHSPCMLLGVYTGLHDAISVQDIGIDNLTAADGLAVGRASGFVGRAMERLLDGLYTLDDQTMYDMLGWLAQEEGIRLEPSALAGMAGPQRICAATVYQQRHGFSQTQLGNATHLVWATGGGMVPEDEMEQYLAKGR</sequence>
<comment type="catalytic activity">
    <reaction evidence="1">
        <text>D-serine = pyruvate + NH4(+)</text>
        <dbReference type="Rhea" id="RHEA:13977"/>
        <dbReference type="ChEBI" id="CHEBI:15361"/>
        <dbReference type="ChEBI" id="CHEBI:28938"/>
        <dbReference type="ChEBI" id="CHEBI:35247"/>
        <dbReference type="EC" id="4.3.1.18"/>
    </reaction>
</comment>
<comment type="cofactor">
    <cofactor evidence="1">
        <name>pyridoxal 5'-phosphate</name>
        <dbReference type="ChEBI" id="CHEBI:597326"/>
    </cofactor>
</comment>
<comment type="subunit">
    <text evidence="1">Monomer.</text>
</comment>
<comment type="similarity">
    <text evidence="1">Belongs to the serine/threonine dehydratase family. DsdA subfamily.</text>
</comment>
<reference key="1">
    <citation type="journal article" date="2011" name="J. Bacteriol.">
        <title>Comparative genomics of 28 Salmonella enterica isolates: evidence for CRISPR-mediated adaptive sublineage evolution.</title>
        <authorList>
            <person name="Fricke W.F."/>
            <person name="Mammel M.K."/>
            <person name="McDermott P.F."/>
            <person name="Tartera C."/>
            <person name="White D.G."/>
            <person name="Leclerc J.E."/>
            <person name="Ravel J."/>
            <person name="Cebula T.A."/>
        </authorList>
    </citation>
    <scope>NUCLEOTIDE SEQUENCE [LARGE SCALE GENOMIC DNA]</scope>
    <source>
        <strain>CVM19633</strain>
    </source>
</reference>
<gene>
    <name evidence="1" type="primary">dsdA</name>
    <name type="ordered locus">SeSA_A4011</name>
</gene>
<organism>
    <name type="scientific">Salmonella schwarzengrund (strain CVM19633)</name>
    <dbReference type="NCBI Taxonomy" id="439843"/>
    <lineage>
        <taxon>Bacteria</taxon>
        <taxon>Pseudomonadati</taxon>
        <taxon>Pseudomonadota</taxon>
        <taxon>Gammaproteobacteria</taxon>
        <taxon>Enterobacterales</taxon>
        <taxon>Enterobacteriaceae</taxon>
        <taxon>Salmonella</taxon>
    </lineage>
</organism>
<evidence type="ECO:0000255" key="1">
    <source>
        <dbReference type="HAMAP-Rule" id="MF_01030"/>
    </source>
</evidence>
<protein>
    <recommendedName>
        <fullName evidence="1">D-serine dehydratase</fullName>
        <ecNumber evidence="1">4.3.1.18</ecNumber>
    </recommendedName>
    <alternativeName>
        <fullName evidence="1">D-serine deaminase</fullName>
        <shortName evidence="1">DSD</shortName>
    </alternativeName>
</protein>
<accession>B4TMW9</accession>
<proteinExistence type="inferred from homology"/>
<dbReference type="EC" id="4.3.1.18" evidence="1"/>
<dbReference type="EMBL" id="CP001127">
    <property type="protein sequence ID" value="ACF91164.1"/>
    <property type="molecule type" value="Genomic_DNA"/>
</dbReference>
<dbReference type="RefSeq" id="WP_000427989.1">
    <property type="nucleotide sequence ID" value="NC_011094.1"/>
</dbReference>
<dbReference type="SMR" id="B4TMW9"/>
<dbReference type="KEGG" id="sew:SeSA_A4011"/>
<dbReference type="HOGENOM" id="CLU_035707_0_0_6"/>
<dbReference type="Proteomes" id="UP000001865">
    <property type="component" value="Chromosome"/>
</dbReference>
<dbReference type="GO" id="GO:0008721">
    <property type="term" value="F:D-serine ammonia-lyase activity"/>
    <property type="evidence" value="ECO:0007669"/>
    <property type="project" value="UniProtKB-EC"/>
</dbReference>
<dbReference type="GO" id="GO:0016836">
    <property type="term" value="F:hydro-lyase activity"/>
    <property type="evidence" value="ECO:0007669"/>
    <property type="project" value="UniProtKB-UniRule"/>
</dbReference>
<dbReference type="GO" id="GO:0030170">
    <property type="term" value="F:pyridoxal phosphate binding"/>
    <property type="evidence" value="ECO:0007669"/>
    <property type="project" value="InterPro"/>
</dbReference>
<dbReference type="GO" id="GO:0036088">
    <property type="term" value="P:D-serine catabolic process"/>
    <property type="evidence" value="ECO:0007669"/>
    <property type="project" value="TreeGrafter"/>
</dbReference>
<dbReference type="GO" id="GO:0009097">
    <property type="term" value="P:isoleucine biosynthetic process"/>
    <property type="evidence" value="ECO:0007669"/>
    <property type="project" value="TreeGrafter"/>
</dbReference>
<dbReference type="CDD" id="cd06447">
    <property type="entry name" value="D-Ser-dehyd"/>
    <property type="match status" value="1"/>
</dbReference>
<dbReference type="FunFam" id="3.40.50.1100:FF:000018">
    <property type="entry name" value="D-serine dehydratase"/>
    <property type="match status" value="1"/>
</dbReference>
<dbReference type="Gene3D" id="3.40.50.1100">
    <property type="match status" value="2"/>
</dbReference>
<dbReference type="HAMAP" id="MF_01030">
    <property type="entry name" value="D_Ser_dehydrat"/>
    <property type="match status" value="1"/>
</dbReference>
<dbReference type="InterPro" id="IPR011780">
    <property type="entry name" value="D_Ser_am_lyase"/>
</dbReference>
<dbReference type="InterPro" id="IPR050147">
    <property type="entry name" value="Ser/Thr_Dehydratase"/>
</dbReference>
<dbReference type="InterPro" id="IPR000634">
    <property type="entry name" value="Ser/Thr_deHydtase_PyrdxlP-BS"/>
</dbReference>
<dbReference type="InterPro" id="IPR001926">
    <property type="entry name" value="TrpB-like_PALP"/>
</dbReference>
<dbReference type="InterPro" id="IPR036052">
    <property type="entry name" value="TrpB-like_PALP_sf"/>
</dbReference>
<dbReference type="NCBIfam" id="TIGR02035">
    <property type="entry name" value="D_Ser_am_lyase"/>
    <property type="match status" value="1"/>
</dbReference>
<dbReference type="NCBIfam" id="NF002823">
    <property type="entry name" value="PRK02991.1"/>
    <property type="match status" value="1"/>
</dbReference>
<dbReference type="PANTHER" id="PTHR48078:SF9">
    <property type="entry name" value="D-SERINE DEHYDRATASE"/>
    <property type="match status" value="1"/>
</dbReference>
<dbReference type="PANTHER" id="PTHR48078">
    <property type="entry name" value="THREONINE DEHYDRATASE, MITOCHONDRIAL-RELATED"/>
    <property type="match status" value="1"/>
</dbReference>
<dbReference type="Pfam" id="PF00291">
    <property type="entry name" value="PALP"/>
    <property type="match status" value="1"/>
</dbReference>
<dbReference type="SUPFAM" id="SSF53686">
    <property type="entry name" value="Tryptophan synthase beta subunit-like PLP-dependent enzymes"/>
    <property type="match status" value="1"/>
</dbReference>
<dbReference type="PROSITE" id="PS00165">
    <property type="entry name" value="DEHYDRATASE_SER_THR"/>
    <property type="match status" value="1"/>
</dbReference>